<sequence>MSLSLYDSAHSLDGKSGWDTPVFSMKDSMDRNPMVTEAWEALCQSQVYFRGKPVGTIAAYDHASEEVLNYDQVFVRDFVPSALAFLMNGEPEIVKNFLLKTLHIQGQDKMIDKFKLGDGAMPASFKVLHNPIKKTDTIIADFGESAIGRVAPVDSGFWWIILLRAYTKSTGDHSLAERPECQKGMRLILSLCLSEGFDTFPTLLCADGCSMVDRRMGIYGYPIEIQALFFMALRSALSMLKHDSEGKEFMEKIVKRLHALSFHMRSYFWLDFQQLNDIYRYKTEEYSHTAVNKFNVIPDSIPDWIFDFMPLRGGYFVGNVSPARMDFRWFALGNCIAILSSLATPEQSMAIMDLIEARWEELVGEMPLKICYPAMESHEWGIVTGCDPKNTRWSYHNGGSWPVLLWLLTAASIKTGRPQIARRAIELAEARLLKDGWPEYYDGKSGRFIGKQARKSQTWSIAGYLVAKMMMDDPTHVGMISMEEEKHMKPPLRRSSSWT</sequence>
<comment type="function">
    <text evidence="2">Invertase that cleaves sucrose into glucose and fructose.</text>
</comment>
<comment type="catalytic activity">
    <reaction evidence="1">
        <text>Hydrolysis of terminal non-reducing beta-D-fructofuranoside residues in beta-D-fructofuranosides.</text>
        <dbReference type="EC" id="3.2.1.26"/>
    </reaction>
</comment>
<comment type="similarity">
    <text evidence="4">Belongs to the glycosyl hydrolase 100 family.</text>
</comment>
<proteinExistence type="evidence at transcript level"/>
<reference key="1">
    <citation type="journal article" date="2000" name="Nature">
        <title>Sequence and analysis of chromosome 1 of the plant Arabidopsis thaliana.</title>
        <authorList>
            <person name="Theologis A."/>
            <person name="Ecker J.R."/>
            <person name="Palm C.J."/>
            <person name="Federspiel N.A."/>
            <person name="Kaul S."/>
            <person name="White O."/>
            <person name="Alonso J."/>
            <person name="Altafi H."/>
            <person name="Araujo R."/>
            <person name="Bowman C.L."/>
            <person name="Brooks S.Y."/>
            <person name="Buehler E."/>
            <person name="Chan A."/>
            <person name="Chao Q."/>
            <person name="Chen H."/>
            <person name="Cheuk R.F."/>
            <person name="Chin C.W."/>
            <person name="Chung M.K."/>
            <person name="Conn L."/>
            <person name="Conway A.B."/>
            <person name="Conway A.R."/>
            <person name="Creasy T.H."/>
            <person name="Dewar K."/>
            <person name="Dunn P."/>
            <person name="Etgu P."/>
            <person name="Feldblyum T.V."/>
            <person name="Feng J.-D."/>
            <person name="Fong B."/>
            <person name="Fujii C.Y."/>
            <person name="Gill J.E."/>
            <person name="Goldsmith A.D."/>
            <person name="Haas B."/>
            <person name="Hansen N.F."/>
            <person name="Hughes B."/>
            <person name="Huizar L."/>
            <person name="Hunter J.L."/>
            <person name="Jenkins J."/>
            <person name="Johnson-Hopson C."/>
            <person name="Khan S."/>
            <person name="Khaykin E."/>
            <person name="Kim C.J."/>
            <person name="Koo H.L."/>
            <person name="Kremenetskaia I."/>
            <person name="Kurtz D.B."/>
            <person name="Kwan A."/>
            <person name="Lam B."/>
            <person name="Langin-Hooper S."/>
            <person name="Lee A."/>
            <person name="Lee J.M."/>
            <person name="Lenz C.A."/>
            <person name="Li J.H."/>
            <person name="Li Y.-P."/>
            <person name="Lin X."/>
            <person name="Liu S.X."/>
            <person name="Liu Z.A."/>
            <person name="Luros J.S."/>
            <person name="Maiti R."/>
            <person name="Marziali A."/>
            <person name="Militscher J."/>
            <person name="Miranda M."/>
            <person name="Nguyen M."/>
            <person name="Nierman W.C."/>
            <person name="Osborne B.I."/>
            <person name="Pai G."/>
            <person name="Peterson J."/>
            <person name="Pham P.K."/>
            <person name="Rizzo M."/>
            <person name="Rooney T."/>
            <person name="Rowley D."/>
            <person name="Sakano H."/>
            <person name="Salzberg S.L."/>
            <person name="Schwartz J.R."/>
            <person name="Shinn P."/>
            <person name="Southwick A.M."/>
            <person name="Sun H."/>
            <person name="Tallon L.J."/>
            <person name="Tambunga G."/>
            <person name="Toriumi M.J."/>
            <person name="Town C.D."/>
            <person name="Utterback T."/>
            <person name="Van Aken S."/>
            <person name="Vaysberg M."/>
            <person name="Vysotskaia V.S."/>
            <person name="Walker M."/>
            <person name="Wu D."/>
            <person name="Yu G."/>
            <person name="Fraser C.M."/>
            <person name="Venter J.C."/>
            <person name="Davis R.W."/>
        </authorList>
    </citation>
    <scope>NUCLEOTIDE SEQUENCE [LARGE SCALE GENOMIC DNA]</scope>
    <source>
        <strain>cv. Columbia</strain>
    </source>
</reference>
<reference key="2">
    <citation type="journal article" date="2017" name="Plant J.">
        <title>Araport11: a complete reannotation of the Arabidopsis thaliana reference genome.</title>
        <authorList>
            <person name="Cheng C.Y."/>
            <person name="Krishnakumar V."/>
            <person name="Chan A.P."/>
            <person name="Thibaud-Nissen F."/>
            <person name="Schobel S."/>
            <person name="Town C.D."/>
        </authorList>
    </citation>
    <scope>GENOME REANNOTATION</scope>
    <source>
        <strain>cv. Columbia</strain>
    </source>
</reference>
<reference key="3">
    <citation type="submission" date="2004-03" db="EMBL/GenBank/DDBJ databases">
        <authorList>
            <consortium name="Center for eukaryotic structural genomics (CESG)"/>
        </authorList>
    </citation>
    <scope>NUCLEOTIDE SEQUENCE [LARGE SCALE MRNA] OF 2-499</scope>
    <source>
        <strain>cv. Columbia</strain>
    </source>
</reference>
<reference key="4">
    <citation type="journal article" date="2011" name="J. Exp. Bot.">
        <title>Exploring the neutral invertase-oxidative stress defence connection in Arabidopsis thaliana.</title>
        <authorList>
            <person name="Xiang L."/>
            <person name="Le Roy K."/>
            <person name="Bolouri-Moghaddam M.R."/>
            <person name="Vanhaecke M."/>
            <person name="Lammens W."/>
            <person name="Rolland F."/>
            <person name="Van den Ende W."/>
        </authorList>
    </citation>
    <scope>GENE FAMILY</scope>
</reference>
<accession>Q9C560</accession>
<evidence type="ECO:0000250" key="1">
    <source>
        <dbReference type="UniProtKB" id="Q9FXA8"/>
    </source>
</evidence>
<evidence type="ECO:0000250" key="2">
    <source>
        <dbReference type="UniProtKB" id="Q9LQF2"/>
    </source>
</evidence>
<evidence type="ECO:0000303" key="3">
    <source>
    </source>
</evidence>
<evidence type="ECO:0000305" key="4"/>
<evidence type="ECO:0000312" key="5">
    <source>
        <dbReference type="Araport" id="AT1G72000"/>
    </source>
</evidence>
<evidence type="ECO:0000312" key="6">
    <source>
        <dbReference type="EMBL" id="AAG51132.1"/>
    </source>
</evidence>
<evidence type="ECO:0000312" key="7">
    <source>
        <dbReference type="EMBL" id="AAG52223.1"/>
    </source>
</evidence>
<organism>
    <name type="scientific">Arabidopsis thaliana</name>
    <name type="common">Mouse-ear cress</name>
    <dbReference type="NCBI Taxonomy" id="3702"/>
    <lineage>
        <taxon>Eukaryota</taxon>
        <taxon>Viridiplantae</taxon>
        <taxon>Streptophyta</taxon>
        <taxon>Embryophyta</taxon>
        <taxon>Tracheophyta</taxon>
        <taxon>Spermatophyta</taxon>
        <taxon>Magnoliopsida</taxon>
        <taxon>eudicotyledons</taxon>
        <taxon>Gunneridae</taxon>
        <taxon>Pentapetalae</taxon>
        <taxon>rosids</taxon>
        <taxon>malvids</taxon>
        <taxon>Brassicales</taxon>
        <taxon>Brassicaceae</taxon>
        <taxon>Camelineae</taxon>
        <taxon>Arabidopsis</taxon>
    </lineage>
</organism>
<gene>
    <name evidence="3" type="primary">INVF</name>
    <name evidence="5" type="ordered locus">At1g72000</name>
    <name evidence="7" type="ORF">F17M19.15</name>
    <name evidence="6" type="ORF">F28P5.11</name>
</gene>
<feature type="chain" id="PRO_0000431502" description="Probable alkaline/neutral invertase F">
    <location>
        <begin position="1"/>
        <end position="499"/>
    </location>
</feature>
<feature type="modified residue" description="Phosphoserine" evidence="2">
    <location>
        <position position="11"/>
    </location>
</feature>
<feature type="modified residue" description="Phosphothreonine" evidence="2">
    <location>
        <position position="20"/>
    </location>
</feature>
<feature type="modified residue" description="Phosphoserine" evidence="2">
    <location>
        <position position="497"/>
    </location>
</feature>
<name>INVF_ARATH</name>
<dbReference type="EC" id="3.2.1.26" evidence="1"/>
<dbReference type="EMBL" id="AC021665">
    <property type="protein sequence ID" value="AAG52223.1"/>
    <property type="molecule type" value="Genomic_DNA"/>
</dbReference>
<dbReference type="EMBL" id="AC069273">
    <property type="protein sequence ID" value="AAG51132.1"/>
    <property type="molecule type" value="Genomic_DNA"/>
</dbReference>
<dbReference type="EMBL" id="CP002684">
    <property type="protein sequence ID" value="AEE35262.1"/>
    <property type="molecule type" value="Genomic_DNA"/>
</dbReference>
<dbReference type="EMBL" id="BT011836">
    <property type="status" value="NOT_ANNOTATED_CDS"/>
    <property type="molecule type" value="mRNA"/>
</dbReference>
<dbReference type="PIR" id="A96743">
    <property type="entry name" value="A96743"/>
</dbReference>
<dbReference type="SMR" id="Q9C560"/>
<dbReference type="STRING" id="3702.Q9C560"/>
<dbReference type="CAZy" id="GH100">
    <property type="family name" value="Glycoside Hydrolase Family 100"/>
</dbReference>
<dbReference type="iPTMnet" id="Q9C560"/>
<dbReference type="PaxDb" id="3702-AT1G72000.1"/>
<dbReference type="ProteomicsDB" id="247179"/>
<dbReference type="DNASU" id="843531"/>
<dbReference type="EnsemblPlants" id="AT1G72000.1">
    <property type="protein sequence ID" value="AT1G72000.1"/>
    <property type="gene ID" value="AT1G72000"/>
</dbReference>
<dbReference type="GeneID" id="843531"/>
<dbReference type="Gramene" id="AT1G72000.1">
    <property type="protein sequence ID" value="AT1G72000.1"/>
    <property type="gene ID" value="AT1G72000"/>
</dbReference>
<dbReference type="KEGG" id="ath:AT1G72000"/>
<dbReference type="Araport" id="AT1G72000"/>
<dbReference type="TAIR" id="AT1G72000">
    <property type="gene designation" value="A/N-INVF"/>
</dbReference>
<dbReference type="eggNOG" id="ENOG502QPS0">
    <property type="taxonomic scope" value="Eukaryota"/>
</dbReference>
<dbReference type="HOGENOM" id="CLU_020846_1_1_1"/>
<dbReference type="InParanoid" id="Q9C560"/>
<dbReference type="OMA" id="MMDDPTH"/>
<dbReference type="PhylomeDB" id="Q9C560"/>
<dbReference type="PRO" id="PR:Q9C560"/>
<dbReference type="Proteomes" id="UP000006548">
    <property type="component" value="Chromosome 1"/>
</dbReference>
<dbReference type="ExpressionAtlas" id="Q9C560">
    <property type="expression patterns" value="baseline and differential"/>
</dbReference>
<dbReference type="GO" id="GO:0004564">
    <property type="term" value="F:beta-fructofuranosidase activity"/>
    <property type="evidence" value="ECO:0007669"/>
    <property type="project" value="UniProtKB-EC"/>
</dbReference>
<dbReference type="GO" id="GO:0033926">
    <property type="term" value="F:endo-alpha-N-acetylgalactosaminidase activity"/>
    <property type="evidence" value="ECO:0007669"/>
    <property type="project" value="InterPro"/>
</dbReference>
<dbReference type="GO" id="GO:0005975">
    <property type="term" value="P:carbohydrate metabolic process"/>
    <property type="evidence" value="ECO:0007669"/>
    <property type="project" value="InterPro"/>
</dbReference>
<dbReference type="FunFam" id="1.50.10.10:FF:000001">
    <property type="entry name" value="probable alkaline/neutral invertase B"/>
    <property type="match status" value="1"/>
</dbReference>
<dbReference type="Gene3D" id="1.50.10.10">
    <property type="match status" value="1"/>
</dbReference>
<dbReference type="InterPro" id="IPR008928">
    <property type="entry name" value="6-hairpin_glycosidase_sf"/>
</dbReference>
<dbReference type="InterPro" id="IPR012341">
    <property type="entry name" value="6hp_glycosidase-like_sf"/>
</dbReference>
<dbReference type="InterPro" id="IPR024746">
    <property type="entry name" value="Glyco_hydro_100"/>
</dbReference>
<dbReference type="PANTHER" id="PTHR31916">
    <property type="match status" value="1"/>
</dbReference>
<dbReference type="PANTHER" id="PTHR31916:SF41">
    <property type="entry name" value="ALKALINE_NEUTRAL INVERTASE F-RELATED"/>
    <property type="match status" value="1"/>
</dbReference>
<dbReference type="Pfam" id="PF12899">
    <property type="entry name" value="Glyco_hydro_100"/>
    <property type="match status" value="1"/>
</dbReference>
<dbReference type="SUPFAM" id="SSF48208">
    <property type="entry name" value="Six-hairpin glycosidases"/>
    <property type="match status" value="1"/>
</dbReference>
<keyword id="KW-0119">Carbohydrate metabolism</keyword>
<keyword id="KW-0326">Glycosidase</keyword>
<keyword id="KW-0378">Hydrolase</keyword>
<keyword id="KW-0597">Phosphoprotein</keyword>
<keyword id="KW-1185">Reference proteome</keyword>
<protein>
    <recommendedName>
        <fullName evidence="4">Probable alkaline/neutral invertase F</fullName>
        <shortName evidence="3">A/N-INVF</shortName>
        <ecNumber evidence="1">3.2.1.26</ecNumber>
    </recommendedName>
</protein>